<evidence type="ECO:0000250" key="1">
    <source>
        <dbReference type="UniProtKB" id="P9WFD7"/>
    </source>
</evidence>
<evidence type="ECO:0000305" key="2"/>
<feature type="chain" id="PRO_0000428560" description="Universal stress protein MT2085">
    <location>
        <begin position="1"/>
        <end position="294"/>
    </location>
</feature>
<feature type="binding site" evidence="1">
    <location>
        <position position="13"/>
    </location>
    <ligand>
        <name>ATP</name>
        <dbReference type="ChEBI" id="CHEBI:30616"/>
        <label>1</label>
    </ligand>
</feature>
<feature type="binding site" evidence="1">
    <location>
        <begin position="117"/>
        <end position="123"/>
    </location>
    <ligand>
        <name>ATP</name>
        <dbReference type="ChEBI" id="CHEBI:30616"/>
        <label>1</label>
    </ligand>
</feature>
<feature type="binding site" evidence="1">
    <location>
        <begin position="131"/>
        <end position="132"/>
    </location>
    <ligand>
        <name>ATP</name>
        <dbReference type="ChEBI" id="CHEBI:30616"/>
        <label>1</label>
    </ligand>
</feature>
<feature type="binding site" evidence="1">
    <location>
        <position position="164"/>
    </location>
    <ligand>
        <name>ATP</name>
        <dbReference type="ChEBI" id="CHEBI:30616"/>
        <label>2</label>
    </ligand>
</feature>
<feature type="binding site" evidence="1">
    <location>
        <position position="197"/>
    </location>
    <ligand>
        <name>ATP</name>
        <dbReference type="ChEBI" id="CHEBI:30616"/>
        <label>2</label>
    </ligand>
</feature>
<feature type="binding site" evidence="1">
    <location>
        <begin position="261"/>
        <end position="267"/>
    </location>
    <ligand>
        <name>ATP</name>
        <dbReference type="ChEBI" id="CHEBI:30616"/>
        <label>2</label>
    </ligand>
</feature>
<feature type="binding site" evidence="1">
    <location>
        <begin position="275"/>
        <end position="277"/>
    </location>
    <ligand>
        <name>ATP</name>
        <dbReference type="ChEBI" id="CHEBI:30616"/>
        <label>2</label>
    </ligand>
</feature>
<keyword id="KW-0067">ATP-binding</keyword>
<keyword id="KW-0547">Nucleotide-binding</keyword>
<keyword id="KW-1185">Reference proteome</keyword>
<name>Y2026_MYCTO</name>
<comment type="similarity">
    <text evidence="2">Belongs to the universal stress protein A family.</text>
</comment>
<gene>
    <name type="ordered locus">MT2085</name>
</gene>
<protein>
    <recommendedName>
        <fullName>Universal stress protein MT2085</fullName>
    </recommendedName>
</protein>
<reference key="1">
    <citation type="journal article" date="2002" name="J. Bacteriol.">
        <title>Whole-genome comparison of Mycobacterium tuberculosis clinical and laboratory strains.</title>
        <authorList>
            <person name="Fleischmann R.D."/>
            <person name="Alland D."/>
            <person name="Eisen J.A."/>
            <person name="Carpenter L."/>
            <person name="White O."/>
            <person name="Peterson J.D."/>
            <person name="DeBoy R.T."/>
            <person name="Dodson R.J."/>
            <person name="Gwinn M.L."/>
            <person name="Haft D.H."/>
            <person name="Hickey E.K."/>
            <person name="Kolonay J.F."/>
            <person name="Nelson W.C."/>
            <person name="Umayam L.A."/>
            <person name="Ermolaeva M.D."/>
            <person name="Salzberg S.L."/>
            <person name="Delcher A."/>
            <person name="Utterback T.R."/>
            <person name="Weidman J.F."/>
            <person name="Khouri H.M."/>
            <person name="Gill J."/>
            <person name="Mikula A."/>
            <person name="Bishai W."/>
            <person name="Jacobs W.R. Jr."/>
            <person name="Venter J.C."/>
            <person name="Fraser C.M."/>
        </authorList>
    </citation>
    <scope>NUCLEOTIDE SEQUENCE [LARGE SCALE GENOMIC DNA]</scope>
    <source>
        <strain>CDC 1551 / Oshkosh</strain>
    </source>
</reference>
<sequence>MSAATAKYGILVGVDGSAQSNAAVAWAAREAVMRQLPITLLHIVAPVVVGWPVGQLYANMTEWQKDNAQQVIEQAREALTNSLGESKPPQVHTELVFSNVVPTLIDASQQAWLMVVGSQGMGALGRLLLGSISTALLHHARCPVAIIHSGNGATPDSDAPVLVGIDGSPASEAATALAFDEASRRRVDLVALHAWTDLGMFPVLGMDWREREKREAEVLAERLAGWQEQYPDVRVHRSLVCDKPARWLLEHSEQAQLVVVGSHGRGGFSGMLLGSVSSAVAHSVRIPVIVVRPS</sequence>
<organism>
    <name type="scientific">Mycobacterium tuberculosis (strain CDC 1551 / Oshkosh)</name>
    <dbReference type="NCBI Taxonomy" id="83331"/>
    <lineage>
        <taxon>Bacteria</taxon>
        <taxon>Bacillati</taxon>
        <taxon>Actinomycetota</taxon>
        <taxon>Actinomycetes</taxon>
        <taxon>Mycobacteriales</taxon>
        <taxon>Mycobacteriaceae</taxon>
        <taxon>Mycobacterium</taxon>
        <taxon>Mycobacterium tuberculosis complex</taxon>
    </lineage>
</organism>
<dbReference type="EMBL" id="AE000516">
    <property type="protein sequence ID" value="AAK46364.1"/>
    <property type="molecule type" value="Genomic_DNA"/>
</dbReference>
<dbReference type="PIR" id="A70942">
    <property type="entry name" value="A70942"/>
</dbReference>
<dbReference type="RefSeq" id="WP_003410150.1">
    <property type="nucleotide sequence ID" value="NZ_KK341227.1"/>
</dbReference>
<dbReference type="SMR" id="P9WFD0"/>
<dbReference type="KEGG" id="mtc:MT2085"/>
<dbReference type="PATRIC" id="fig|83331.31.peg.2249"/>
<dbReference type="HOGENOM" id="CLU_049301_2_3_11"/>
<dbReference type="Proteomes" id="UP000001020">
    <property type="component" value="Chromosome"/>
</dbReference>
<dbReference type="GO" id="GO:0005524">
    <property type="term" value="F:ATP binding"/>
    <property type="evidence" value="ECO:0007669"/>
    <property type="project" value="UniProtKB-KW"/>
</dbReference>
<dbReference type="CDD" id="cd23944">
    <property type="entry name" value="USP_Rv2623_repeat1"/>
    <property type="match status" value="1"/>
</dbReference>
<dbReference type="CDD" id="cd23661">
    <property type="entry name" value="USP_Rv2623_repeat2"/>
    <property type="match status" value="1"/>
</dbReference>
<dbReference type="Gene3D" id="3.40.50.620">
    <property type="entry name" value="HUPs"/>
    <property type="match status" value="2"/>
</dbReference>
<dbReference type="InterPro" id="IPR014729">
    <property type="entry name" value="Rossmann-like_a/b/a_fold"/>
</dbReference>
<dbReference type="InterPro" id="IPR006015">
    <property type="entry name" value="Universal_stress_UspA"/>
</dbReference>
<dbReference type="InterPro" id="IPR051688">
    <property type="entry name" value="USP_A"/>
</dbReference>
<dbReference type="InterPro" id="IPR006016">
    <property type="entry name" value="UspA"/>
</dbReference>
<dbReference type="PANTHER" id="PTHR43010">
    <property type="entry name" value="UNIVERSAL STRESS PROTEIN SLR1230"/>
    <property type="match status" value="1"/>
</dbReference>
<dbReference type="PANTHER" id="PTHR43010:SF1">
    <property type="entry name" value="USPA DOMAIN-CONTAINING PROTEIN"/>
    <property type="match status" value="1"/>
</dbReference>
<dbReference type="Pfam" id="PF00582">
    <property type="entry name" value="Usp"/>
    <property type="match status" value="2"/>
</dbReference>
<dbReference type="PRINTS" id="PR01438">
    <property type="entry name" value="UNVRSLSTRESS"/>
</dbReference>
<dbReference type="SUPFAM" id="SSF52402">
    <property type="entry name" value="Adenine nucleotide alpha hydrolases-like"/>
    <property type="match status" value="2"/>
</dbReference>
<accession>P9WFD0</accession>
<accession>L0TBA6</accession>
<accession>O53472</accession>
<accession>Q7D7L7</accession>
<proteinExistence type="inferred from homology"/>